<evidence type="ECO:0000255" key="1">
    <source>
        <dbReference type="HAMAP-Rule" id="MF_00195"/>
    </source>
</evidence>
<evidence type="ECO:0000256" key="2">
    <source>
        <dbReference type="SAM" id="MobiDB-lite"/>
    </source>
</evidence>
<keyword id="KW-0342">GTP-binding</keyword>
<keyword id="KW-0547">Nucleotide-binding</keyword>
<keyword id="KW-0677">Repeat</keyword>
<keyword id="KW-0690">Ribosome biogenesis</keyword>
<sequence>MVPVIALVGRPNVGKSTLFNRLTKTRDAIVAEYAGLTRDRQYGEAKWQGRTYIVIDTGGISGDEEGIDAKMAEQSLQAIEEADAVLFMVDSRAGMTAADQLIAEHLRKRNKRSFLVANKVDTVDPDIARAEFSPLGLGDALPIAAAHGRGINAMLEAALGIFPRDDEGEEGEGEAEVVAEGEEPKRVPGPSEKDGIKIAIIGRPNVGKSTLVNRMLGEERVIVYDQAGTTRDSIYIPFERDEDKYTLIDTAGVRRRGKIFEAVEKFSVVKTLQAIQDANVVIFVMDAREGVVEHDLNLLGFVLETGRALVIALNKWDGMEPGQRDYVKIELERRLMFADFADIHFISALHGTGVGHLYKSVQAAFQSAVTRWPTSRLTRILEDAVQEHQPPLVNGRRIKLRYAHLGGANPPLIVIHGNQVEAVPKAYTRYLENTYRRVLKLVGTPIRIEYKGGDNPYEGKKNSLTERQVNKKRRLMSHHKKAEKKRRDKKR</sequence>
<gene>
    <name evidence="1" type="primary">der</name>
    <name type="synonym">engA</name>
    <name type="ordered locus">Avin_40240</name>
</gene>
<feature type="chain" id="PRO_1000204029" description="GTPase Der">
    <location>
        <begin position="1"/>
        <end position="491"/>
    </location>
</feature>
<feature type="domain" description="EngA-type G 1">
    <location>
        <begin position="3"/>
        <end position="166"/>
    </location>
</feature>
<feature type="domain" description="EngA-type G 2">
    <location>
        <begin position="196"/>
        <end position="369"/>
    </location>
</feature>
<feature type="domain" description="KH-like" evidence="1">
    <location>
        <begin position="370"/>
        <end position="454"/>
    </location>
</feature>
<feature type="region of interest" description="Disordered" evidence="2">
    <location>
        <begin position="164"/>
        <end position="191"/>
    </location>
</feature>
<feature type="region of interest" description="Disordered" evidence="2">
    <location>
        <begin position="452"/>
        <end position="491"/>
    </location>
</feature>
<feature type="compositionally biased region" description="Acidic residues" evidence="2">
    <location>
        <begin position="166"/>
        <end position="181"/>
    </location>
</feature>
<feature type="compositionally biased region" description="Basic and acidic residues" evidence="2">
    <location>
        <begin position="182"/>
        <end position="191"/>
    </location>
</feature>
<feature type="compositionally biased region" description="Basic and acidic residues" evidence="2">
    <location>
        <begin position="452"/>
        <end position="464"/>
    </location>
</feature>
<feature type="compositionally biased region" description="Basic residues" evidence="2">
    <location>
        <begin position="470"/>
        <end position="491"/>
    </location>
</feature>
<feature type="binding site" evidence="1">
    <location>
        <begin position="9"/>
        <end position="16"/>
    </location>
    <ligand>
        <name>GTP</name>
        <dbReference type="ChEBI" id="CHEBI:37565"/>
        <label>1</label>
    </ligand>
</feature>
<feature type="binding site" evidence="1">
    <location>
        <begin position="56"/>
        <end position="60"/>
    </location>
    <ligand>
        <name>GTP</name>
        <dbReference type="ChEBI" id="CHEBI:37565"/>
        <label>1</label>
    </ligand>
</feature>
<feature type="binding site" evidence="1">
    <location>
        <begin position="118"/>
        <end position="121"/>
    </location>
    <ligand>
        <name>GTP</name>
        <dbReference type="ChEBI" id="CHEBI:37565"/>
        <label>1</label>
    </ligand>
</feature>
<feature type="binding site" evidence="1">
    <location>
        <begin position="202"/>
        <end position="209"/>
    </location>
    <ligand>
        <name>GTP</name>
        <dbReference type="ChEBI" id="CHEBI:37565"/>
        <label>2</label>
    </ligand>
</feature>
<feature type="binding site" evidence="1">
    <location>
        <begin position="249"/>
        <end position="253"/>
    </location>
    <ligand>
        <name>GTP</name>
        <dbReference type="ChEBI" id="CHEBI:37565"/>
        <label>2</label>
    </ligand>
</feature>
<feature type="binding site" evidence="1">
    <location>
        <begin position="314"/>
        <end position="317"/>
    </location>
    <ligand>
        <name>GTP</name>
        <dbReference type="ChEBI" id="CHEBI:37565"/>
        <label>2</label>
    </ligand>
</feature>
<reference key="1">
    <citation type="journal article" date="2009" name="J. Bacteriol.">
        <title>Genome sequence of Azotobacter vinelandii, an obligate aerobe specialized to support diverse anaerobic metabolic processes.</title>
        <authorList>
            <person name="Setubal J.C."/>
            <person name="Dos Santos P."/>
            <person name="Goldman B.S."/>
            <person name="Ertesvaag H."/>
            <person name="Espin G."/>
            <person name="Rubio L.M."/>
            <person name="Valla S."/>
            <person name="Almeida N.F."/>
            <person name="Balasubramanian D."/>
            <person name="Cromes L."/>
            <person name="Curatti L."/>
            <person name="Du Z."/>
            <person name="Godsy E."/>
            <person name="Goodner B."/>
            <person name="Hellner-Burris K."/>
            <person name="Hernandez J.A."/>
            <person name="Houmiel K."/>
            <person name="Imperial J."/>
            <person name="Kennedy C."/>
            <person name="Larson T.J."/>
            <person name="Latreille P."/>
            <person name="Ligon L.S."/>
            <person name="Lu J."/>
            <person name="Maerk M."/>
            <person name="Miller N.M."/>
            <person name="Norton S."/>
            <person name="O'Carroll I.P."/>
            <person name="Paulsen I."/>
            <person name="Raulfs E.C."/>
            <person name="Roemer R."/>
            <person name="Rosser J."/>
            <person name="Segura D."/>
            <person name="Slater S."/>
            <person name="Stricklin S.L."/>
            <person name="Studholme D.J."/>
            <person name="Sun J."/>
            <person name="Viana C.J."/>
            <person name="Wallin E."/>
            <person name="Wang B."/>
            <person name="Wheeler C."/>
            <person name="Zhu H."/>
            <person name="Dean D.R."/>
            <person name="Dixon R."/>
            <person name="Wood D."/>
        </authorList>
    </citation>
    <scope>NUCLEOTIDE SEQUENCE [LARGE SCALE GENOMIC DNA]</scope>
    <source>
        <strain>DJ / ATCC BAA-1303</strain>
    </source>
</reference>
<comment type="function">
    <text evidence="1">GTPase that plays an essential role in the late steps of ribosome biogenesis.</text>
</comment>
<comment type="subunit">
    <text evidence="1">Associates with the 50S ribosomal subunit.</text>
</comment>
<comment type="similarity">
    <text evidence="1">Belongs to the TRAFAC class TrmE-Era-EngA-EngB-Septin-like GTPase superfamily. EngA (Der) GTPase family.</text>
</comment>
<organism>
    <name type="scientific">Azotobacter vinelandii (strain DJ / ATCC BAA-1303)</name>
    <dbReference type="NCBI Taxonomy" id="322710"/>
    <lineage>
        <taxon>Bacteria</taxon>
        <taxon>Pseudomonadati</taxon>
        <taxon>Pseudomonadota</taxon>
        <taxon>Gammaproteobacteria</taxon>
        <taxon>Pseudomonadales</taxon>
        <taxon>Pseudomonadaceae</taxon>
        <taxon>Azotobacter</taxon>
    </lineage>
</organism>
<proteinExistence type="inferred from homology"/>
<name>DER_AZOVD</name>
<accession>C1DE52</accession>
<dbReference type="EMBL" id="CP001157">
    <property type="protein sequence ID" value="ACO80160.1"/>
    <property type="molecule type" value="Genomic_DNA"/>
</dbReference>
<dbReference type="RefSeq" id="WP_012702535.1">
    <property type="nucleotide sequence ID" value="NC_012560.1"/>
</dbReference>
<dbReference type="SMR" id="C1DE52"/>
<dbReference type="STRING" id="322710.Avin_40240"/>
<dbReference type="EnsemblBacteria" id="ACO80160">
    <property type="protein sequence ID" value="ACO80160"/>
    <property type="gene ID" value="Avin_40240"/>
</dbReference>
<dbReference type="GeneID" id="88186968"/>
<dbReference type="KEGG" id="avn:Avin_40240"/>
<dbReference type="eggNOG" id="COG1160">
    <property type="taxonomic scope" value="Bacteria"/>
</dbReference>
<dbReference type="HOGENOM" id="CLU_016077_6_2_6"/>
<dbReference type="OrthoDB" id="9805918at2"/>
<dbReference type="Proteomes" id="UP000002424">
    <property type="component" value="Chromosome"/>
</dbReference>
<dbReference type="GO" id="GO:0005525">
    <property type="term" value="F:GTP binding"/>
    <property type="evidence" value="ECO:0007669"/>
    <property type="project" value="UniProtKB-UniRule"/>
</dbReference>
<dbReference type="GO" id="GO:0043022">
    <property type="term" value="F:ribosome binding"/>
    <property type="evidence" value="ECO:0007669"/>
    <property type="project" value="TreeGrafter"/>
</dbReference>
<dbReference type="GO" id="GO:0042254">
    <property type="term" value="P:ribosome biogenesis"/>
    <property type="evidence" value="ECO:0007669"/>
    <property type="project" value="UniProtKB-KW"/>
</dbReference>
<dbReference type="CDD" id="cd01894">
    <property type="entry name" value="EngA1"/>
    <property type="match status" value="1"/>
</dbReference>
<dbReference type="CDD" id="cd01895">
    <property type="entry name" value="EngA2"/>
    <property type="match status" value="1"/>
</dbReference>
<dbReference type="FunFam" id="3.30.300.20:FF:000004">
    <property type="entry name" value="GTPase Der"/>
    <property type="match status" value="1"/>
</dbReference>
<dbReference type="FunFam" id="3.40.50.300:FF:000040">
    <property type="entry name" value="GTPase Der"/>
    <property type="match status" value="1"/>
</dbReference>
<dbReference type="FunFam" id="3.40.50.300:FF:000057">
    <property type="entry name" value="GTPase Der"/>
    <property type="match status" value="1"/>
</dbReference>
<dbReference type="Gene3D" id="3.30.300.20">
    <property type="match status" value="1"/>
</dbReference>
<dbReference type="Gene3D" id="3.40.50.300">
    <property type="entry name" value="P-loop containing nucleotide triphosphate hydrolases"/>
    <property type="match status" value="2"/>
</dbReference>
<dbReference type="HAMAP" id="MF_00195">
    <property type="entry name" value="GTPase_Der"/>
    <property type="match status" value="1"/>
</dbReference>
<dbReference type="InterPro" id="IPR031166">
    <property type="entry name" value="G_ENGA"/>
</dbReference>
<dbReference type="InterPro" id="IPR006073">
    <property type="entry name" value="GTP-bd"/>
</dbReference>
<dbReference type="InterPro" id="IPR016484">
    <property type="entry name" value="GTPase_Der"/>
</dbReference>
<dbReference type="InterPro" id="IPR032859">
    <property type="entry name" value="KH_dom-like"/>
</dbReference>
<dbReference type="InterPro" id="IPR015946">
    <property type="entry name" value="KH_dom-like_a/b"/>
</dbReference>
<dbReference type="InterPro" id="IPR027417">
    <property type="entry name" value="P-loop_NTPase"/>
</dbReference>
<dbReference type="InterPro" id="IPR005225">
    <property type="entry name" value="Small_GTP-bd"/>
</dbReference>
<dbReference type="NCBIfam" id="TIGR03594">
    <property type="entry name" value="GTPase_EngA"/>
    <property type="match status" value="1"/>
</dbReference>
<dbReference type="NCBIfam" id="TIGR00231">
    <property type="entry name" value="small_GTP"/>
    <property type="match status" value="2"/>
</dbReference>
<dbReference type="PANTHER" id="PTHR43834">
    <property type="entry name" value="GTPASE DER"/>
    <property type="match status" value="1"/>
</dbReference>
<dbReference type="PANTHER" id="PTHR43834:SF6">
    <property type="entry name" value="GTPASE DER"/>
    <property type="match status" value="1"/>
</dbReference>
<dbReference type="Pfam" id="PF14714">
    <property type="entry name" value="KH_dom-like"/>
    <property type="match status" value="1"/>
</dbReference>
<dbReference type="Pfam" id="PF01926">
    <property type="entry name" value="MMR_HSR1"/>
    <property type="match status" value="2"/>
</dbReference>
<dbReference type="PIRSF" id="PIRSF006485">
    <property type="entry name" value="GTP-binding_EngA"/>
    <property type="match status" value="1"/>
</dbReference>
<dbReference type="PRINTS" id="PR00326">
    <property type="entry name" value="GTP1OBG"/>
</dbReference>
<dbReference type="SUPFAM" id="SSF52540">
    <property type="entry name" value="P-loop containing nucleoside triphosphate hydrolases"/>
    <property type="match status" value="2"/>
</dbReference>
<dbReference type="PROSITE" id="PS51712">
    <property type="entry name" value="G_ENGA"/>
    <property type="match status" value="2"/>
</dbReference>
<protein>
    <recommendedName>
        <fullName evidence="1">GTPase Der</fullName>
    </recommendedName>
    <alternativeName>
        <fullName evidence="1">GTP-binding protein EngA</fullName>
    </alternativeName>
</protein>